<comment type="function">
    <text>May be involved in gene regulation within neural lineage cells potentially by direct DNA binding or by binding to other transcription factors.</text>
</comment>
<comment type="subcellular location">
    <subcellularLocation>
        <location>Nucleus</location>
    </subcellularLocation>
</comment>
<comment type="tissue specificity">
    <text>Expressed in the brain and not in the thymus.</text>
</comment>
<protein>
    <recommendedName>
        <fullName>Rhombotin-1</fullName>
    </recommendedName>
    <alternativeName>
        <fullName>LIM domain only protein 1</fullName>
        <shortName>LMO-1</shortName>
    </alternativeName>
</protein>
<feature type="chain" id="PRO_0000269568" description="Rhombotin-1">
    <location>
        <begin position="1"/>
        <end position="156"/>
    </location>
</feature>
<feature type="domain" description="LIM zinc-binding 1" evidence="1">
    <location>
        <begin position="22"/>
        <end position="84"/>
    </location>
</feature>
<feature type="domain" description="LIM zinc-binding 2" evidence="1">
    <location>
        <begin position="86"/>
        <end position="148"/>
    </location>
</feature>
<accession>Q0P5B3</accession>
<reference key="1">
    <citation type="submission" date="2006-08" db="EMBL/GenBank/DDBJ databases">
        <authorList>
            <consortium name="NIH - Mammalian Gene Collection (MGC) project"/>
        </authorList>
    </citation>
    <scope>NUCLEOTIDE SEQUENCE [LARGE SCALE MRNA]</scope>
    <source>
        <strain>Hereford</strain>
        <tissue>Fetal cerebellum</tissue>
    </source>
</reference>
<name>RBTN1_BOVIN</name>
<dbReference type="EMBL" id="BC120273">
    <property type="protein sequence ID" value="AAI20274.1"/>
    <property type="molecule type" value="mRNA"/>
</dbReference>
<dbReference type="RefSeq" id="NP_001069363.1">
    <property type="nucleotide sequence ID" value="NM_001075895.2"/>
</dbReference>
<dbReference type="RefSeq" id="XP_005216032.1">
    <property type="nucleotide sequence ID" value="XM_005215975.4"/>
</dbReference>
<dbReference type="SMR" id="Q0P5B3"/>
<dbReference type="FunCoup" id="Q0P5B3">
    <property type="interactions" value="545"/>
</dbReference>
<dbReference type="PaxDb" id="9913-ENSBTAP00000042937"/>
<dbReference type="Ensembl" id="ENSBTAT00000045558.3">
    <property type="protein sequence ID" value="ENSBTAP00000042937.3"/>
    <property type="gene ID" value="ENSBTAG00000016320.6"/>
</dbReference>
<dbReference type="GeneID" id="527152"/>
<dbReference type="KEGG" id="bta:527152"/>
<dbReference type="CTD" id="4004"/>
<dbReference type="VEuPathDB" id="HostDB:ENSBTAG00000016320"/>
<dbReference type="VGNC" id="VGNC:30933">
    <property type="gene designation" value="LMO1"/>
</dbReference>
<dbReference type="eggNOG" id="KOG0490">
    <property type="taxonomic scope" value="Eukaryota"/>
</dbReference>
<dbReference type="GeneTree" id="ENSGT00940000153908"/>
<dbReference type="HOGENOM" id="CLU_001357_7_1_1"/>
<dbReference type="InParanoid" id="Q0P5B3"/>
<dbReference type="OMA" id="IRDRYML"/>
<dbReference type="OrthoDB" id="6352355at2759"/>
<dbReference type="TreeFam" id="TF351071"/>
<dbReference type="Reactome" id="R-BTA-8939236">
    <property type="pathway name" value="RUNX1 regulates transcription of genes involved in differentiation of HSCs"/>
</dbReference>
<dbReference type="Proteomes" id="UP000009136">
    <property type="component" value="Chromosome 15"/>
</dbReference>
<dbReference type="Bgee" id="ENSBTAG00000016320">
    <property type="expression patterns" value="Expressed in oocyte and 90 other cell types or tissues"/>
</dbReference>
<dbReference type="GO" id="GO:0005634">
    <property type="term" value="C:nucleus"/>
    <property type="evidence" value="ECO:0000318"/>
    <property type="project" value="GO_Central"/>
</dbReference>
<dbReference type="GO" id="GO:0140297">
    <property type="term" value="F:DNA-binding transcription factor binding"/>
    <property type="evidence" value="ECO:0000318"/>
    <property type="project" value="GO_Central"/>
</dbReference>
<dbReference type="GO" id="GO:0046872">
    <property type="term" value="F:metal ion binding"/>
    <property type="evidence" value="ECO:0007669"/>
    <property type="project" value="UniProtKB-KW"/>
</dbReference>
<dbReference type="GO" id="GO:0003713">
    <property type="term" value="F:transcription coactivator activity"/>
    <property type="evidence" value="ECO:0000318"/>
    <property type="project" value="GO_Central"/>
</dbReference>
<dbReference type="GO" id="GO:0045944">
    <property type="term" value="P:positive regulation of transcription by RNA polymerase II"/>
    <property type="evidence" value="ECO:0000318"/>
    <property type="project" value="GO_Central"/>
</dbReference>
<dbReference type="CDD" id="cd09388">
    <property type="entry name" value="LIM1_LMO1_LMO3"/>
    <property type="match status" value="1"/>
</dbReference>
<dbReference type="CDD" id="cd09389">
    <property type="entry name" value="LIM2_LMO1_LMO3"/>
    <property type="match status" value="1"/>
</dbReference>
<dbReference type="FunFam" id="2.10.110.10:FF:000015">
    <property type="entry name" value="LIM domain only 3"/>
    <property type="match status" value="1"/>
</dbReference>
<dbReference type="FunFam" id="2.10.110.10:FF:000016">
    <property type="entry name" value="LIM domain only 3"/>
    <property type="match status" value="1"/>
</dbReference>
<dbReference type="Gene3D" id="2.10.110.10">
    <property type="entry name" value="Cysteine Rich Protein"/>
    <property type="match status" value="2"/>
</dbReference>
<dbReference type="InterPro" id="IPR050945">
    <property type="entry name" value="LMO_RBTN_TF"/>
</dbReference>
<dbReference type="InterPro" id="IPR001781">
    <property type="entry name" value="Znf_LIM"/>
</dbReference>
<dbReference type="PANTHER" id="PTHR45787">
    <property type="entry name" value="LD11652P"/>
    <property type="match status" value="1"/>
</dbReference>
<dbReference type="PANTHER" id="PTHR45787:SF2">
    <property type="entry name" value="RHOMBOTIN-1"/>
    <property type="match status" value="1"/>
</dbReference>
<dbReference type="Pfam" id="PF00412">
    <property type="entry name" value="LIM"/>
    <property type="match status" value="2"/>
</dbReference>
<dbReference type="SMART" id="SM00132">
    <property type="entry name" value="LIM"/>
    <property type="match status" value="2"/>
</dbReference>
<dbReference type="SUPFAM" id="SSF57716">
    <property type="entry name" value="Glucocorticoid receptor-like (DNA-binding domain)"/>
    <property type="match status" value="3"/>
</dbReference>
<dbReference type="PROSITE" id="PS00478">
    <property type="entry name" value="LIM_DOMAIN_1"/>
    <property type="match status" value="2"/>
</dbReference>
<dbReference type="PROSITE" id="PS50023">
    <property type="entry name" value="LIM_DOMAIN_2"/>
    <property type="match status" value="2"/>
</dbReference>
<evidence type="ECO:0000255" key="1">
    <source>
        <dbReference type="PROSITE-ProRule" id="PRU00125"/>
    </source>
</evidence>
<organism>
    <name type="scientific">Bos taurus</name>
    <name type="common">Bovine</name>
    <dbReference type="NCBI Taxonomy" id="9913"/>
    <lineage>
        <taxon>Eukaryota</taxon>
        <taxon>Metazoa</taxon>
        <taxon>Chordata</taxon>
        <taxon>Craniata</taxon>
        <taxon>Vertebrata</taxon>
        <taxon>Euteleostomi</taxon>
        <taxon>Mammalia</taxon>
        <taxon>Eutheria</taxon>
        <taxon>Laurasiatheria</taxon>
        <taxon>Artiodactyla</taxon>
        <taxon>Ruminantia</taxon>
        <taxon>Pecora</taxon>
        <taxon>Bovidae</taxon>
        <taxon>Bovinae</taxon>
        <taxon>Bos</taxon>
    </lineage>
</organism>
<proteinExistence type="evidence at transcript level"/>
<keyword id="KW-0440">LIM domain</keyword>
<keyword id="KW-0479">Metal-binding</keyword>
<keyword id="KW-0539">Nucleus</keyword>
<keyword id="KW-1185">Reference proteome</keyword>
<keyword id="KW-0677">Repeat</keyword>
<keyword id="KW-0862">Zinc</keyword>
<sequence length="156" mass="17823">MMVLDKEDGVPMLSVQPKGKQKGCAGCNRKIKDRYLLKALDQYWHEDCLKCACCDCRLGEVGSTLYTKANLILCRRDYLRLFGTTGNCAACSKLIPAFEMVMRARDNVYHLDCFACQLCNQRFCVGDKFFLKNNMILCQMDYEEGQLNGTFDSHVQ</sequence>
<gene>
    <name type="primary">LMO1</name>
    <name type="synonym">RBTN1</name>
</gene>